<comment type="function">
    <text evidence="1">Catalyzes the attachment of proline to tRNA(Pro) in a two-step reaction: proline is first activated by ATP to form Pro-AMP and then transferred to the acceptor end of tRNA(Pro). As ProRS can inadvertently accommodate and process non-cognate amino acids such as alanine and cysteine, to avoid such errors it has two additional distinct editing activities against alanine. One activity is designated as 'pretransfer' editing and involves the tRNA(Pro)-independent hydrolysis of activated Ala-AMP. The other activity is designated 'posttransfer' editing and involves deacylation of mischarged Ala-tRNA(Pro). The misacylated Cys-tRNA(Pro) is not edited by ProRS.</text>
</comment>
<comment type="catalytic activity">
    <reaction evidence="1">
        <text>tRNA(Pro) + L-proline + ATP = L-prolyl-tRNA(Pro) + AMP + diphosphate</text>
        <dbReference type="Rhea" id="RHEA:14305"/>
        <dbReference type="Rhea" id="RHEA-COMP:9700"/>
        <dbReference type="Rhea" id="RHEA-COMP:9702"/>
        <dbReference type="ChEBI" id="CHEBI:30616"/>
        <dbReference type="ChEBI" id="CHEBI:33019"/>
        <dbReference type="ChEBI" id="CHEBI:60039"/>
        <dbReference type="ChEBI" id="CHEBI:78442"/>
        <dbReference type="ChEBI" id="CHEBI:78532"/>
        <dbReference type="ChEBI" id="CHEBI:456215"/>
        <dbReference type="EC" id="6.1.1.15"/>
    </reaction>
</comment>
<comment type="subunit">
    <text evidence="1">Homodimer.</text>
</comment>
<comment type="subcellular location">
    <subcellularLocation>
        <location evidence="1">Cytoplasm</location>
    </subcellularLocation>
</comment>
<comment type="domain">
    <text evidence="1">Consists of three domains: the N-terminal catalytic domain, the editing domain and the C-terminal anticodon-binding domain.</text>
</comment>
<comment type="similarity">
    <text evidence="1">Belongs to the class-II aminoacyl-tRNA synthetase family. ProS type 1 subfamily.</text>
</comment>
<protein>
    <recommendedName>
        <fullName evidence="1">Proline--tRNA ligase</fullName>
        <ecNumber evidence="1">6.1.1.15</ecNumber>
    </recommendedName>
    <alternativeName>
        <fullName evidence="1">Prolyl-tRNA synthetase</fullName>
        <shortName evidence="1">ProRS</shortName>
    </alternativeName>
</protein>
<keyword id="KW-0030">Aminoacyl-tRNA synthetase</keyword>
<keyword id="KW-0067">ATP-binding</keyword>
<keyword id="KW-0963">Cytoplasm</keyword>
<keyword id="KW-0436">Ligase</keyword>
<keyword id="KW-0547">Nucleotide-binding</keyword>
<keyword id="KW-0648">Protein biosynthesis</keyword>
<keyword id="KW-1185">Reference proteome</keyword>
<reference key="1">
    <citation type="journal article" date="2003" name="Proc. Natl. Acad. Sci. U.S.A.">
        <title>The complete genome sequence of the Arabidopsis and tomato pathogen Pseudomonas syringae pv. tomato DC3000.</title>
        <authorList>
            <person name="Buell C.R."/>
            <person name="Joardar V."/>
            <person name="Lindeberg M."/>
            <person name="Selengut J."/>
            <person name="Paulsen I.T."/>
            <person name="Gwinn M.L."/>
            <person name="Dodson R.J."/>
            <person name="DeBoy R.T."/>
            <person name="Durkin A.S."/>
            <person name="Kolonay J.F."/>
            <person name="Madupu R."/>
            <person name="Daugherty S.C."/>
            <person name="Brinkac L.M."/>
            <person name="Beanan M.J."/>
            <person name="Haft D.H."/>
            <person name="Nelson W.C."/>
            <person name="Davidsen T.M."/>
            <person name="Zafar N."/>
            <person name="Zhou L."/>
            <person name="Liu J."/>
            <person name="Yuan Q."/>
            <person name="Khouri H.M."/>
            <person name="Fedorova N.B."/>
            <person name="Tran B."/>
            <person name="Russell D."/>
            <person name="Berry K.J."/>
            <person name="Utterback T.R."/>
            <person name="Van Aken S.E."/>
            <person name="Feldblyum T.V."/>
            <person name="D'Ascenzo M."/>
            <person name="Deng W.-L."/>
            <person name="Ramos A.R."/>
            <person name="Alfano J.R."/>
            <person name="Cartinhour S."/>
            <person name="Chatterjee A.K."/>
            <person name="Delaney T.P."/>
            <person name="Lazarowitz S.G."/>
            <person name="Martin G.B."/>
            <person name="Schneider D.J."/>
            <person name="Tang X."/>
            <person name="Bender C.L."/>
            <person name="White O."/>
            <person name="Fraser C.M."/>
            <person name="Collmer A."/>
        </authorList>
    </citation>
    <scope>NUCLEOTIDE SEQUENCE [LARGE SCALE GENOMIC DNA]</scope>
    <source>
        <strain>ATCC BAA-871 / DC3000</strain>
    </source>
</reference>
<accession>Q87Y24</accession>
<evidence type="ECO:0000255" key="1">
    <source>
        <dbReference type="HAMAP-Rule" id="MF_01569"/>
    </source>
</evidence>
<dbReference type="EC" id="6.1.1.15" evidence="1"/>
<dbReference type="EMBL" id="AE016853">
    <property type="protein sequence ID" value="AAO57447.1"/>
    <property type="molecule type" value="Genomic_DNA"/>
</dbReference>
<dbReference type="RefSeq" id="NP_793752.1">
    <property type="nucleotide sequence ID" value="NC_004578.1"/>
</dbReference>
<dbReference type="RefSeq" id="WP_011104817.1">
    <property type="nucleotide sequence ID" value="NC_004578.1"/>
</dbReference>
<dbReference type="SMR" id="Q87Y24"/>
<dbReference type="STRING" id="223283.PSPTO_3988"/>
<dbReference type="GeneID" id="1185664"/>
<dbReference type="KEGG" id="pst:PSPTO_3988"/>
<dbReference type="PATRIC" id="fig|223283.9.peg.4090"/>
<dbReference type="eggNOG" id="COG0442">
    <property type="taxonomic scope" value="Bacteria"/>
</dbReference>
<dbReference type="HOGENOM" id="CLU_016739_0_0_6"/>
<dbReference type="OrthoDB" id="9809052at2"/>
<dbReference type="PhylomeDB" id="Q87Y24"/>
<dbReference type="Proteomes" id="UP000002515">
    <property type="component" value="Chromosome"/>
</dbReference>
<dbReference type="GO" id="GO:0005829">
    <property type="term" value="C:cytosol"/>
    <property type="evidence" value="ECO:0007669"/>
    <property type="project" value="TreeGrafter"/>
</dbReference>
<dbReference type="GO" id="GO:0002161">
    <property type="term" value="F:aminoacyl-tRNA deacylase activity"/>
    <property type="evidence" value="ECO:0007669"/>
    <property type="project" value="InterPro"/>
</dbReference>
<dbReference type="GO" id="GO:0005524">
    <property type="term" value="F:ATP binding"/>
    <property type="evidence" value="ECO:0007669"/>
    <property type="project" value="UniProtKB-UniRule"/>
</dbReference>
<dbReference type="GO" id="GO:0004827">
    <property type="term" value="F:proline-tRNA ligase activity"/>
    <property type="evidence" value="ECO:0007669"/>
    <property type="project" value="UniProtKB-UniRule"/>
</dbReference>
<dbReference type="GO" id="GO:0006433">
    <property type="term" value="P:prolyl-tRNA aminoacylation"/>
    <property type="evidence" value="ECO:0007669"/>
    <property type="project" value="UniProtKB-UniRule"/>
</dbReference>
<dbReference type="CDD" id="cd04334">
    <property type="entry name" value="ProRS-INS"/>
    <property type="match status" value="1"/>
</dbReference>
<dbReference type="CDD" id="cd00861">
    <property type="entry name" value="ProRS_anticodon_short"/>
    <property type="match status" value="1"/>
</dbReference>
<dbReference type="CDD" id="cd00779">
    <property type="entry name" value="ProRS_core_prok"/>
    <property type="match status" value="1"/>
</dbReference>
<dbReference type="FunFam" id="3.30.930.10:FF:000043">
    <property type="entry name" value="Proline--tRNA ligase"/>
    <property type="match status" value="1"/>
</dbReference>
<dbReference type="FunFam" id="3.30.930.10:FF:000097">
    <property type="entry name" value="Proline--tRNA ligase"/>
    <property type="match status" value="1"/>
</dbReference>
<dbReference type="FunFam" id="3.90.960.10:FF:000001">
    <property type="entry name" value="Proline--tRNA ligase"/>
    <property type="match status" value="1"/>
</dbReference>
<dbReference type="Gene3D" id="3.40.50.800">
    <property type="entry name" value="Anticodon-binding domain"/>
    <property type="match status" value="1"/>
</dbReference>
<dbReference type="Gene3D" id="3.30.930.10">
    <property type="entry name" value="Bira Bifunctional Protein, Domain 2"/>
    <property type="match status" value="2"/>
</dbReference>
<dbReference type="Gene3D" id="3.90.960.10">
    <property type="entry name" value="YbaK/aminoacyl-tRNA synthetase-associated domain"/>
    <property type="match status" value="1"/>
</dbReference>
<dbReference type="HAMAP" id="MF_01569">
    <property type="entry name" value="Pro_tRNA_synth_type1"/>
    <property type="match status" value="1"/>
</dbReference>
<dbReference type="InterPro" id="IPR002314">
    <property type="entry name" value="aa-tRNA-synt_IIb"/>
</dbReference>
<dbReference type="InterPro" id="IPR006195">
    <property type="entry name" value="aa-tRNA-synth_II"/>
</dbReference>
<dbReference type="InterPro" id="IPR045864">
    <property type="entry name" value="aa-tRNA-synth_II/BPL/LPL"/>
</dbReference>
<dbReference type="InterPro" id="IPR004154">
    <property type="entry name" value="Anticodon-bd"/>
</dbReference>
<dbReference type="InterPro" id="IPR036621">
    <property type="entry name" value="Anticodon-bd_dom_sf"/>
</dbReference>
<dbReference type="InterPro" id="IPR002316">
    <property type="entry name" value="Pro-tRNA-ligase_IIa"/>
</dbReference>
<dbReference type="InterPro" id="IPR004500">
    <property type="entry name" value="Pro-tRNA-synth_IIa_bac-type"/>
</dbReference>
<dbReference type="InterPro" id="IPR023717">
    <property type="entry name" value="Pro-tRNA-Synthase_IIa_type1"/>
</dbReference>
<dbReference type="InterPro" id="IPR050062">
    <property type="entry name" value="Pro-tRNA_synthetase"/>
</dbReference>
<dbReference type="InterPro" id="IPR044140">
    <property type="entry name" value="ProRS_anticodon_short"/>
</dbReference>
<dbReference type="InterPro" id="IPR033730">
    <property type="entry name" value="ProRS_core_prok"/>
</dbReference>
<dbReference type="InterPro" id="IPR036754">
    <property type="entry name" value="YbaK/aa-tRNA-synt-asso_dom_sf"/>
</dbReference>
<dbReference type="InterPro" id="IPR007214">
    <property type="entry name" value="YbaK/aa-tRNA-synth-assoc-dom"/>
</dbReference>
<dbReference type="NCBIfam" id="NF006625">
    <property type="entry name" value="PRK09194.1"/>
    <property type="match status" value="1"/>
</dbReference>
<dbReference type="NCBIfam" id="TIGR00409">
    <property type="entry name" value="proS_fam_II"/>
    <property type="match status" value="1"/>
</dbReference>
<dbReference type="PANTHER" id="PTHR42753">
    <property type="entry name" value="MITOCHONDRIAL RIBOSOME PROTEIN L39/PROLYL-TRNA LIGASE FAMILY MEMBER"/>
    <property type="match status" value="1"/>
</dbReference>
<dbReference type="PANTHER" id="PTHR42753:SF2">
    <property type="entry name" value="PROLINE--TRNA LIGASE"/>
    <property type="match status" value="1"/>
</dbReference>
<dbReference type="Pfam" id="PF03129">
    <property type="entry name" value="HGTP_anticodon"/>
    <property type="match status" value="1"/>
</dbReference>
<dbReference type="Pfam" id="PF00587">
    <property type="entry name" value="tRNA-synt_2b"/>
    <property type="match status" value="1"/>
</dbReference>
<dbReference type="Pfam" id="PF04073">
    <property type="entry name" value="tRNA_edit"/>
    <property type="match status" value="1"/>
</dbReference>
<dbReference type="PIRSF" id="PIRSF001535">
    <property type="entry name" value="ProRS_1"/>
    <property type="match status" value="1"/>
</dbReference>
<dbReference type="PRINTS" id="PR01046">
    <property type="entry name" value="TRNASYNTHPRO"/>
</dbReference>
<dbReference type="SUPFAM" id="SSF52954">
    <property type="entry name" value="Class II aaRS ABD-related"/>
    <property type="match status" value="1"/>
</dbReference>
<dbReference type="SUPFAM" id="SSF55681">
    <property type="entry name" value="Class II aaRS and biotin synthetases"/>
    <property type="match status" value="1"/>
</dbReference>
<dbReference type="SUPFAM" id="SSF55826">
    <property type="entry name" value="YbaK/ProRS associated domain"/>
    <property type="match status" value="1"/>
</dbReference>
<dbReference type="PROSITE" id="PS50862">
    <property type="entry name" value="AA_TRNA_LIGASE_II"/>
    <property type="match status" value="1"/>
</dbReference>
<sequence length="571" mass="63001">MRTSQFLLATQKETPSDAVVVSHQLMLRAGMIRKLASGLYTWLPMGLRVLRKVEAIVREEMNAVGALEILMPGIQPAELWQESGRWEQYGPELMRLVDRHNREFCLGPTHEEVITDLARNELNSYKQLPINMYQIQTKFRDEIRPRFGLMRGREFVMKDAYSFHADNASLQVTYDRMHLAYSNVFSRLGLKFRPVEADNGSIGGAGSHEFHVLAESGEDDIVFSNGSDYAANIEKAEAVPREKARAAATEELRLVDTPNAKTIAQLVEGFGLPIEKTVKTLVVHAAEEGKLIALIIRGDHELNEIKASQQELVASPLVMASEAELRDAIGAGAGSLGPLNLPLPCIIDRSVELMSDFAVGANIDDKHYFGVNWERDLPVPTVADLRNVVAGDPSPDGQGTLEIKRGIEVGHIFQLGTKYSEAMKCQVLGENGKPVNLAMGCYGIGVSRVVAAAIEQNSDENGIIWNDTLAPFQIALIPLRYETDAVREATDKLYAELTAAGFEVLLDDRDKKTSPGIKFADMELIGIPHRIVVSDRGLAEGNLEYKSRTESQPQAIAVADVLSFIQGRVKR</sequence>
<name>SYP_PSESM</name>
<proteinExistence type="inferred from homology"/>
<gene>
    <name evidence="1" type="primary">proS</name>
    <name type="ordered locus">PSPTO_3988</name>
</gene>
<organism>
    <name type="scientific">Pseudomonas syringae pv. tomato (strain ATCC BAA-871 / DC3000)</name>
    <dbReference type="NCBI Taxonomy" id="223283"/>
    <lineage>
        <taxon>Bacteria</taxon>
        <taxon>Pseudomonadati</taxon>
        <taxon>Pseudomonadota</taxon>
        <taxon>Gammaproteobacteria</taxon>
        <taxon>Pseudomonadales</taxon>
        <taxon>Pseudomonadaceae</taxon>
        <taxon>Pseudomonas</taxon>
    </lineage>
</organism>
<feature type="chain" id="PRO_0000248750" description="Proline--tRNA ligase">
    <location>
        <begin position="1"/>
        <end position="571"/>
    </location>
</feature>